<sequence>MTNSKNRFGNKFIGAHVSAAGGVDNAPLRAREIGANAFALFTKNQRQWVAKPLEEKTISAFKANCALLGFSPQQILPHDSYLINLGAPEAEKLEKSRLAFIDEMERCQLLGLNLLNFHPGSHLEKISEKACLSLIAESINLAHQAVPDVVAVIENTAGQGSNLGWRFEHLAEIIEQVEDKSRVGVCLDTCHTFAAGYDLRTPEACETTFAEFERVVGMHYLRAMHINDSKVKLASKVDRHHALGKGEIGWDCFEYIAKDSRFDSIPLILETIEPELWPQEIEQLRKYHLSSIA</sequence>
<protein>
    <recommendedName>
        <fullName evidence="1">Probable endonuclease 4</fullName>
        <ecNumber evidence="1">3.1.21.2</ecNumber>
    </recommendedName>
    <alternativeName>
        <fullName evidence="1">Endodeoxyribonuclease IV</fullName>
    </alternativeName>
    <alternativeName>
        <fullName evidence="1">Endonuclease IV</fullName>
    </alternativeName>
</protein>
<feature type="chain" id="PRO_0000190886" description="Probable endonuclease 4">
    <location>
        <begin position="1"/>
        <end position="293"/>
    </location>
</feature>
<feature type="binding site" evidence="1">
    <location>
        <position position="78"/>
    </location>
    <ligand>
        <name>Zn(2+)</name>
        <dbReference type="ChEBI" id="CHEBI:29105"/>
        <label>1</label>
    </ligand>
</feature>
<feature type="binding site" evidence="1">
    <location>
        <position position="118"/>
    </location>
    <ligand>
        <name>Zn(2+)</name>
        <dbReference type="ChEBI" id="CHEBI:29105"/>
        <label>1</label>
    </ligand>
</feature>
<feature type="binding site" evidence="1">
    <location>
        <position position="154"/>
    </location>
    <ligand>
        <name>Zn(2+)</name>
        <dbReference type="ChEBI" id="CHEBI:29105"/>
        <label>1</label>
    </ligand>
</feature>
<feature type="binding site" evidence="1">
    <location>
        <position position="154"/>
    </location>
    <ligand>
        <name>Zn(2+)</name>
        <dbReference type="ChEBI" id="CHEBI:29105"/>
        <label>2</label>
    </ligand>
</feature>
<feature type="binding site" evidence="1">
    <location>
        <position position="188"/>
    </location>
    <ligand>
        <name>Zn(2+)</name>
        <dbReference type="ChEBI" id="CHEBI:29105"/>
        <label>2</label>
    </ligand>
</feature>
<feature type="binding site" evidence="1">
    <location>
        <position position="191"/>
    </location>
    <ligand>
        <name>Zn(2+)</name>
        <dbReference type="ChEBI" id="CHEBI:29105"/>
        <label>3</label>
    </ligand>
</feature>
<feature type="binding site" evidence="1">
    <location>
        <position position="225"/>
    </location>
    <ligand>
        <name>Zn(2+)</name>
        <dbReference type="ChEBI" id="CHEBI:29105"/>
        <label>2</label>
    </ligand>
</feature>
<feature type="binding site" evidence="1">
    <location>
        <position position="238"/>
    </location>
    <ligand>
        <name>Zn(2+)</name>
        <dbReference type="ChEBI" id="CHEBI:29105"/>
        <label>3</label>
    </ligand>
</feature>
<feature type="binding site" evidence="1">
    <location>
        <position position="240"/>
    </location>
    <ligand>
        <name>Zn(2+)</name>
        <dbReference type="ChEBI" id="CHEBI:29105"/>
        <label>3</label>
    </ligand>
</feature>
<feature type="binding site" evidence="1">
    <location>
        <position position="270"/>
    </location>
    <ligand>
        <name>Zn(2+)</name>
        <dbReference type="ChEBI" id="CHEBI:29105"/>
        <label>2</label>
    </ligand>
</feature>
<name>END4_VIBVU</name>
<proteinExistence type="inferred from homology"/>
<accession>Q8DEP6</accession>
<evidence type="ECO:0000255" key="1">
    <source>
        <dbReference type="HAMAP-Rule" id="MF_00152"/>
    </source>
</evidence>
<dbReference type="EC" id="3.1.21.2" evidence="1"/>
<dbReference type="EMBL" id="AE016795">
    <property type="protein sequence ID" value="AAO09058.1"/>
    <property type="molecule type" value="Genomic_DNA"/>
</dbReference>
<dbReference type="RefSeq" id="WP_011078628.1">
    <property type="nucleotide sequence ID" value="NC_004459.3"/>
</dbReference>
<dbReference type="SMR" id="Q8DEP6"/>
<dbReference type="KEGG" id="vvu:VV1_0541"/>
<dbReference type="HOGENOM" id="CLU_025885_0_4_6"/>
<dbReference type="Proteomes" id="UP000002275">
    <property type="component" value="Chromosome 1"/>
</dbReference>
<dbReference type="GO" id="GO:0008833">
    <property type="term" value="F:deoxyribonuclease IV (phage-T4-induced) activity"/>
    <property type="evidence" value="ECO:0007669"/>
    <property type="project" value="UniProtKB-UniRule"/>
</dbReference>
<dbReference type="GO" id="GO:0003677">
    <property type="term" value="F:DNA binding"/>
    <property type="evidence" value="ECO:0007669"/>
    <property type="project" value="InterPro"/>
</dbReference>
<dbReference type="GO" id="GO:0003906">
    <property type="term" value="F:DNA-(apurinic or apyrimidinic site) endonuclease activity"/>
    <property type="evidence" value="ECO:0007669"/>
    <property type="project" value="TreeGrafter"/>
</dbReference>
<dbReference type="GO" id="GO:0008081">
    <property type="term" value="F:phosphoric diester hydrolase activity"/>
    <property type="evidence" value="ECO:0007669"/>
    <property type="project" value="TreeGrafter"/>
</dbReference>
<dbReference type="GO" id="GO:0008270">
    <property type="term" value="F:zinc ion binding"/>
    <property type="evidence" value="ECO:0007669"/>
    <property type="project" value="UniProtKB-UniRule"/>
</dbReference>
<dbReference type="GO" id="GO:0006284">
    <property type="term" value="P:base-excision repair"/>
    <property type="evidence" value="ECO:0007669"/>
    <property type="project" value="TreeGrafter"/>
</dbReference>
<dbReference type="CDD" id="cd00019">
    <property type="entry name" value="AP2Ec"/>
    <property type="match status" value="1"/>
</dbReference>
<dbReference type="FunFam" id="3.20.20.150:FF:000001">
    <property type="entry name" value="Probable endonuclease 4"/>
    <property type="match status" value="1"/>
</dbReference>
<dbReference type="Gene3D" id="3.20.20.150">
    <property type="entry name" value="Divalent-metal-dependent TIM barrel enzymes"/>
    <property type="match status" value="1"/>
</dbReference>
<dbReference type="HAMAP" id="MF_00152">
    <property type="entry name" value="Nfo"/>
    <property type="match status" value="1"/>
</dbReference>
<dbReference type="InterPro" id="IPR001719">
    <property type="entry name" value="AP_endonuc_2"/>
</dbReference>
<dbReference type="InterPro" id="IPR018246">
    <property type="entry name" value="AP_endonuc_F2_Zn_BS"/>
</dbReference>
<dbReference type="InterPro" id="IPR036237">
    <property type="entry name" value="Xyl_isomerase-like_sf"/>
</dbReference>
<dbReference type="InterPro" id="IPR013022">
    <property type="entry name" value="Xyl_isomerase-like_TIM-brl"/>
</dbReference>
<dbReference type="NCBIfam" id="TIGR00587">
    <property type="entry name" value="nfo"/>
    <property type="match status" value="1"/>
</dbReference>
<dbReference type="NCBIfam" id="NF002199">
    <property type="entry name" value="PRK01060.1-4"/>
    <property type="match status" value="1"/>
</dbReference>
<dbReference type="PANTHER" id="PTHR21445:SF0">
    <property type="entry name" value="APURINIC-APYRIMIDINIC ENDONUCLEASE"/>
    <property type="match status" value="1"/>
</dbReference>
<dbReference type="PANTHER" id="PTHR21445">
    <property type="entry name" value="ENDONUCLEASE IV ENDODEOXYRIBONUCLEASE IV"/>
    <property type="match status" value="1"/>
</dbReference>
<dbReference type="Pfam" id="PF01261">
    <property type="entry name" value="AP_endonuc_2"/>
    <property type="match status" value="1"/>
</dbReference>
<dbReference type="SMART" id="SM00518">
    <property type="entry name" value="AP2Ec"/>
    <property type="match status" value="1"/>
</dbReference>
<dbReference type="SUPFAM" id="SSF51658">
    <property type="entry name" value="Xylose isomerase-like"/>
    <property type="match status" value="1"/>
</dbReference>
<dbReference type="PROSITE" id="PS00729">
    <property type="entry name" value="AP_NUCLEASE_F2_1"/>
    <property type="match status" value="1"/>
</dbReference>
<dbReference type="PROSITE" id="PS00730">
    <property type="entry name" value="AP_NUCLEASE_F2_2"/>
    <property type="match status" value="1"/>
</dbReference>
<dbReference type="PROSITE" id="PS00731">
    <property type="entry name" value="AP_NUCLEASE_F2_3"/>
    <property type="match status" value="1"/>
</dbReference>
<dbReference type="PROSITE" id="PS51432">
    <property type="entry name" value="AP_NUCLEASE_F2_4"/>
    <property type="match status" value="1"/>
</dbReference>
<keyword id="KW-0227">DNA damage</keyword>
<keyword id="KW-0234">DNA repair</keyword>
<keyword id="KW-0255">Endonuclease</keyword>
<keyword id="KW-0378">Hydrolase</keyword>
<keyword id="KW-0479">Metal-binding</keyword>
<keyword id="KW-0540">Nuclease</keyword>
<keyword id="KW-0862">Zinc</keyword>
<gene>
    <name evidence="1" type="primary">nfo</name>
    <name type="ordered locus">VV1_0541</name>
</gene>
<comment type="function">
    <text evidence="1">Endonuclease IV plays a role in DNA repair. It cleaves phosphodiester bonds at apurinic or apyrimidinic (AP) sites, generating a 3'-hydroxyl group and a 5'-terminal sugar phosphate.</text>
</comment>
<comment type="catalytic activity">
    <reaction evidence="1">
        <text>Endonucleolytic cleavage to 5'-phosphooligonucleotide end-products.</text>
        <dbReference type="EC" id="3.1.21.2"/>
    </reaction>
</comment>
<comment type="cofactor">
    <cofactor evidence="1">
        <name>Zn(2+)</name>
        <dbReference type="ChEBI" id="CHEBI:29105"/>
    </cofactor>
    <text evidence="1">Binds 3 Zn(2+) ions.</text>
</comment>
<comment type="similarity">
    <text evidence="1">Belongs to the AP endonuclease 2 family.</text>
</comment>
<organism>
    <name type="scientific">Vibrio vulnificus (strain CMCP6)</name>
    <dbReference type="NCBI Taxonomy" id="216895"/>
    <lineage>
        <taxon>Bacteria</taxon>
        <taxon>Pseudomonadati</taxon>
        <taxon>Pseudomonadota</taxon>
        <taxon>Gammaproteobacteria</taxon>
        <taxon>Vibrionales</taxon>
        <taxon>Vibrionaceae</taxon>
        <taxon>Vibrio</taxon>
    </lineage>
</organism>
<reference key="1">
    <citation type="submission" date="2002-12" db="EMBL/GenBank/DDBJ databases">
        <title>Complete genome sequence of Vibrio vulnificus CMCP6.</title>
        <authorList>
            <person name="Rhee J.H."/>
            <person name="Kim S.Y."/>
            <person name="Chung S.S."/>
            <person name="Kim J.J."/>
            <person name="Moon Y.H."/>
            <person name="Jeong H."/>
            <person name="Choy H.E."/>
        </authorList>
    </citation>
    <scope>NUCLEOTIDE SEQUENCE [LARGE SCALE GENOMIC DNA]</scope>
    <source>
        <strain>CMCP6</strain>
    </source>
</reference>